<accession>B7VID4</accession>
<evidence type="ECO:0000255" key="1">
    <source>
        <dbReference type="HAMAP-Rule" id="MF_00539"/>
    </source>
</evidence>
<evidence type="ECO:0000256" key="2">
    <source>
        <dbReference type="SAM" id="MobiDB-lite"/>
    </source>
</evidence>
<evidence type="ECO:0000305" key="3"/>
<reference key="1">
    <citation type="submission" date="2009-02" db="EMBL/GenBank/DDBJ databases">
        <title>Vibrio splendidus str. LGP32 complete genome.</title>
        <authorList>
            <person name="Mazel D."/>
            <person name="Le Roux F."/>
        </authorList>
    </citation>
    <scope>NUCLEOTIDE SEQUENCE [LARGE SCALE GENOMIC DNA]</scope>
    <source>
        <strain>LGP32</strain>
    </source>
</reference>
<organism>
    <name type="scientific">Vibrio atlanticus (strain LGP32)</name>
    <name type="common">Vibrio splendidus (strain Mel32)</name>
    <dbReference type="NCBI Taxonomy" id="575788"/>
    <lineage>
        <taxon>Bacteria</taxon>
        <taxon>Pseudomonadati</taxon>
        <taxon>Pseudomonadota</taxon>
        <taxon>Gammaproteobacteria</taxon>
        <taxon>Vibrionales</taxon>
        <taxon>Vibrionaceae</taxon>
        <taxon>Vibrio</taxon>
    </lineage>
</organism>
<name>RL27_VIBA3</name>
<proteinExistence type="inferred from homology"/>
<gene>
    <name evidence="1" type="primary">rpmA</name>
    <name type="ordered locus">VS_0362</name>
</gene>
<dbReference type="EMBL" id="FM954972">
    <property type="protein sequence ID" value="CAV17371.1"/>
    <property type="molecule type" value="Genomic_DNA"/>
</dbReference>
<dbReference type="SMR" id="B7VID4"/>
<dbReference type="STRING" id="575788.VS_0362"/>
<dbReference type="KEGG" id="vsp:VS_0362"/>
<dbReference type="eggNOG" id="COG0211">
    <property type="taxonomic scope" value="Bacteria"/>
</dbReference>
<dbReference type="HOGENOM" id="CLU_095424_4_1_6"/>
<dbReference type="Proteomes" id="UP000009100">
    <property type="component" value="Chromosome 1"/>
</dbReference>
<dbReference type="GO" id="GO:0022625">
    <property type="term" value="C:cytosolic large ribosomal subunit"/>
    <property type="evidence" value="ECO:0007669"/>
    <property type="project" value="TreeGrafter"/>
</dbReference>
<dbReference type="GO" id="GO:0003735">
    <property type="term" value="F:structural constituent of ribosome"/>
    <property type="evidence" value="ECO:0007669"/>
    <property type="project" value="InterPro"/>
</dbReference>
<dbReference type="GO" id="GO:0006412">
    <property type="term" value="P:translation"/>
    <property type="evidence" value="ECO:0007669"/>
    <property type="project" value="UniProtKB-UniRule"/>
</dbReference>
<dbReference type="FunFam" id="2.40.50.100:FF:000001">
    <property type="entry name" value="50S ribosomal protein L27"/>
    <property type="match status" value="1"/>
</dbReference>
<dbReference type="Gene3D" id="2.40.50.100">
    <property type="match status" value="1"/>
</dbReference>
<dbReference type="HAMAP" id="MF_00539">
    <property type="entry name" value="Ribosomal_bL27"/>
    <property type="match status" value="1"/>
</dbReference>
<dbReference type="InterPro" id="IPR001684">
    <property type="entry name" value="Ribosomal_bL27"/>
</dbReference>
<dbReference type="InterPro" id="IPR018261">
    <property type="entry name" value="Ribosomal_bL27_CS"/>
</dbReference>
<dbReference type="NCBIfam" id="TIGR00062">
    <property type="entry name" value="L27"/>
    <property type="match status" value="1"/>
</dbReference>
<dbReference type="PANTHER" id="PTHR15893:SF0">
    <property type="entry name" value="LARGE RIBOSOMAL SUBUNIT PROTEIN BL27M"/>
    <property type="match status" value="1"/>
</dbReference>
<dbReference type="PANTHER" id="PTHR15893">
    <property type="entry name" value="RIBOSOMAL PROTEIN L27"/>
    <property type="match status" value="1"/>
</dbReference>
<dbReference type="Pfam" id="PF01016">
    <property type="entry name" value="Ribosomal_L27"/>
    <property type="match status" value="1"/>
</dbReference>
<dbReference type="PRINTS" id="PR00063">
    <property type="entry name" value="RIBOSOMALL27"/>
</dbReference>
<dbReference type="SUPFAM" id="SSF110324">
    <property type="entry name" value="Ribosomal L27 protein-like"/>
    <property type="match status" value="1"/>
</dbReference>
<dbReference type="PROSITE" id="PS00831">
    <property type="entry name" value="RIBOSOMAL_L27"/>
    <property type="match status" value="1"/>
</dbReference>
<keyword id="KW-0687">Ribonucleoprotein</keyword>
<keyword id="KW-0689">Ribosomal protein</keyword>
<protein>
    <recommendedName>
        <fullName evidence="1">Large ribosomal subunit protein bL27</fullName>
    </recommendedName>
    <alternativeName>
        <fullName evidence="3">50S ribosomal protein L27</fullName>
    </alternativeName>
</protein>
<comment type="similarity">
    <text evidence="1">Belongs to the bacterial ribosomal protein bL27 family.</text>
</comment>
<sequence length="85" mass="9094">MAHKKAGGSTNNGRDSESKRLGVKRFGGESVLAGNIIVRQRGTKFHAGTNVGIGKDHTLFALTEGKVKFAVKGPKNRKFVSIEAE</sequence>
<feature type="chain" id="PRO_1000146561" description="Large ribosomal subunit protein bL27">
    <location>
        <begin position="1"/>
        <end position="85"/>
    </location>
</feature>
<feature type="region of interest" description="Disordered" evidence="2">
    <location>
        <begin position="1"/>
        <end position="22"/>
    </location>
</feature>